<proteinExistence type="evidence at protein level"/>
<sequence length="566" mass="62543">MSGRLGELLVRENLISVQQLRKAQEEQQKNGTRIGTALVKTGAIEESKLTDFLSKQYGVPAINLKDFDVEPDIIKLVPKEVAEKHLVVPVNRAGPSLIVAMCDPSNIFAVDDLKFLTGYNIETVVASEVSIREAIERYYAEKGPSLEDIVGDVGDDIEVTKEETENIDEMAKAADDAPVVKLVNLILMDAIKKRASDIHVEPYEKDFRVRFRIDGVMYEVMRPPMKLRNAITSRLKIMASLDISERRLPQDGRIKIKMGGGKEMDFRVSVCPTLFGEKVVMRLLDKSNLQLDMTKLGFDAQPLAWFKEAIDRPYGMVLVTGPTGSGKTTTLYSALSSLNGLDTNICTAEDPVEFNFAGINQVQMHDDIGLNFAAALRSFLRQDPDIIMIGEIRDFETAEIGVKAALTGHLVLSTLHTNDAPGTVSRLLNMGIEPFLVTASLNLILAQRLARRLCPACKKPAENVDEQALIDAGVPPDKIGTFTMYEKVGCRDCNDRGYRGRVAIYEVMPFWDGLKELVINGASAAELKQEAIRLGMSSLRMSGLRKMMDGATTLEEVVGNTAPDRF</sequence>
<keyword id="KW-0002">3D-structure</keyword>
<keyword id="KW-0067">ATP-binding</keyword>
<keyword id="KW-0963">Cytoplasm</keyword>
<keyword id="KW-0479">Metal-binding</keyword>
<keyword id="KW-0547">Nucleotide-binding</keyword>
<keyword id="KW-1185">Reference proteome</keyword>
<keyword id="KW-0862">Zinc</keyword>
<accession>Q1D098</accession>
<dbReference type="EMBL" id="CP000113">
    <property type="protein sequence ID" value="ABF89788.1"/>
    <property type="molecule type" value="Genomic_DNA"/>
</dbReference>
<dbReference type="RefSeq" id="WP_011555739.1">
    <property type="nucleotide sequence ID" value="NC_008095.1"/>
</dbReference>
<dbReference type="PDB" id="3JC8">
    <property type="method" value="EM"/>
    <property type="chains" value="Ba/Bb/Bc/Bd/Be/Bf=1-566"/>
</dbReference>
<dbReference type="PDBsum" id="3JC8"/>
<dbReference type="SMR" id="Q1D098"/>
<dbReference type="STRING" id="246197.MXAN_5788"/>
<dbReference type="EnsemblBacteria" id="ABF89788">
    <property type="protein sequence ID" value="ABF89788"/>
    <property type="gene ID" value="MXAN_5788"/>
</dbReference>
<dbReference type="GeneID" id="41363031"/>
<dbReference type="KEGG" id="mxa:MXAN_5788"/>
<dbReference type="eggNOG" id="COG2804">
    <property type="taxonomic scope" value="Bacteria"/>
</dbReference>
<dbReference type="HOGENOM" id="CLU_013446_10_1_7"/>
<dbReference type="OrthoDB" id="9805147at2"/>
<dbReference type="Proteomes" id="UP000002402">
    <property type="component" value="Chromosome"/>
</dbReference>
<dbReference type="GO" id="GO:0005737">
    <property type="term" value="C:cytoplasm"/>
    <property type="evidence" value="ECO:0007669"/>
    <property type="project" value="UniProtKB-SubCell"/>
</dbReference>
<dbReference type="GO" id="GO:0005886">
    <property type="term" value="C:plasma membrane"/>
    <property type="evidence" value="ECO:0007669"/>
    <property type="project" value="TreeGrafter"/>
</dbReference>
<dbReference type="GO" id="GO:0005524">
    <property type="term" value="F:ATP binding"/>
    <property type="evidence" value="ECO:0007669"/>
    <property type="project" value="UniProtKB-KW"/>
</dbReference>
<dbReference type="GO" id="GO:0016887">
    <property type="term" value="F:ATP hydrolysis activity"/>
    <property type="evidence" value="ECO:0007669"/>
    <property type="project" value="InterPro"/>
</dbReference>
<dbReference type="GO" id="GO:0046872">
    <property type="term" value="F:metal ion binding"/>
    <property type="evidence" value="ECO:0007669"/>
    <property type="project" value="UniProtKB-KW"/>
</dbReference>
<dbReference type="GO" id="GO:0009297">
    <property type="term" value="P:pilus assembly"/>
    <property type="evidence" value="ECO:0007669"/>
    <property type="project" value="InterPro"/>
</dbReference>
<dbReference type="CDD" id="cd01129">
    <property type="entry name" value="PulE-GspE-like"/>
    <property type="match status" value="1"/>
</dbReference>
<dbReference type="FunFam" id="3.30.450.90:FF:000001">
    <property type="entry name" value="Type II secretion system ATPase GspE"/>
    <property type="match status" value="1"/>
</dbReference>
<dbReference type="FunFam" id="3.30.300.160:FF:000002">
    <property type="entry name" value="Type II secretion system protein E"/>
    <property type="match status" value="1"/>
</dbReference>
<dbReference type="FunFam" id="3.40.50.300:FF:000398">
    <property type="entry name" value="Type IV pilus assembly ATPase PilB"/>
    <property type="match status" value="1"/>
</dbReference>
<dbReference type="Gene3D" id="3.30.450.90">
    <property type="match status" value="1"/>
</dbReference>
<dbReference type="Gene3D" id="3.40.50.300">
    <property type="entry name" value="P-loop containing nucleotide triphosphate hydrolases"/>
    <property type="match status" value="1"/>
</dbReference>
<dbReference type="Gene3D" id="3.30.300.160">
    <property type="entry name" value="Type II secretion system, protein E, N-terminal domain"/>
    <property type="match status" value="1"/>
</dbReference>
<dbReference type="InterPro" id="IPR003593">
    <property type="entry name" value="AAA+_ATPase"/>
</dbReference>
<dbReference type="InterPro" id="IPR013374">
    <property type="entry name" value="ATPase_typ4_pilus-assembl_PilB"/>
</dbReference>
<dbReference type="InterPro" id="IPR027417">
    <property type="entry name" value="P-loop_NTPase"/>
</dbReference>
<dbReference type="InterPro" id="IPR001482">
    <property type="entry name" value="T2SS/T4SS_dom"/>
</dbReference>
<dbReference type="InterPro" id="IPR037257">
    <property type="entry name" value="T2SS_E_N_sf"/>
</dbReference>
<dbReference type="InterPro" id="IPR007831">
    <property type="entry name" value="T2SS_GspE_N"/>
</dbReference>
<dbReference type="NCBIfam" id="TIGR02538">
    <property type="entry name" value="type_IV_pilB"/>
    <property type="match status" value="1"/>
</dbReference>
<dbReference type="PANTHER" id="PTHR30258:SF1">
    <property type="entry name" value="PROTEIN TRANSPORT PROTEIN HOFB HOMOLOG"/>
    <property type="match status" value="1"/>
</dbReference>
<dbReference type="PANTHER" id="PTHR30258">
    <property type="entry name" value="TYPE II SECRETION SYSTEM PROTEIN GSPE-RELATED"/>
    <property type="match status" value="1"/>
</dbReference>
<dbReference type="Pfam" id="PF05157">
    <property type="entry name" value="MshEN"/>
    <property type="match status" value="1"/>
</dbReference>
<dbReference type="Pfam" id="PF00437">
    <property type="entry name" value="T2SSE"/>
    <property type="match status" value="1"/>
</dbReference>
<dbReference type="SMART" id="SM00382">
    <property type="entry name" value="AAA"/>
    <property type="match status" value="1"/>
</dbReference>
<dbReference type="SUPFAM" id="SSF160246">
    <property type="entry name" value="EspE N-terminal domain-like"/>
    <property type="match status" value="1"/>
</dbReference>
<dbReference type="SUPFAM" id="SSF52540">
    <property type="entry name" value="P-loop containing nucleoside triphosphate hydrolases"/>
    <property type="match status" value="1"/>
</dbReference>
<dbReference type="PROSITE" id="PS00662">
    <property type="entry name" value="T2SP_E"/>
    <property type="match status" value="1"/>
</dbReference>
<feature type="chain" id="PRO_0000450081" description="Type IV pilus assembly ATPase PilB">
    <location>
        <begin position="1"/>
        <end position="566"/>
    </location>
</feature>
<feature type="binding site" evidence="1">
    <location>
        <begin position="321"/>
        <end position="328"/>
    </location>
    <ligand>
        <name>ATP</name>
        <dbReference type="ChEBI" id="CHEBI:30616"/>
    </ligand>
</feature>
<feature type="binding site" evidence="2">
    <location>
        <position position="454"/>
    </location>
    <ligand>
        <name>Zn(2+)</name>
        <dbReference type="ChEBI" id="CHEBI:29105"/>
    </ligand>
</feature>
<feature type="binding site" evidence="2">
    <location>
        <position position="457"/>
    </location>
    <ligand>
        <name>Zn(2+)</name>
        <dbReference type="ChEBI" id="CHEBI:29105"/>
    </ligand>
</feature>
<feature type="binding site" evidence="2">
    <location>
        <position position="490"/>
    </location>
    <ligand>
        <name>Zn(2+)</name>
        <dbReference type="ChEBI" id="CHEBI:29105"/>
    </ligand>
</feature>
<feature type="binding site" evidence="2">
    <location>
        <position position="493"/>
    </location>
    <ligand>
        <name>Zn(2+)</name>
        <dbReference type="ChEBI" id="CHEBI:29105"/>
    </ligand>
</feature>
<feature type="mutagenesis site" description="Strongly reduced ATPase activity." evidence="3">
    <original>K</original>
    <variation>A</variation>
    <location>
        <position position="327"/>
    </location>
</feature>
<feature type="mutagenesis site" description="Restored exopolysaccharide (EPS) production of PilA mutant." evidence="6">
    <original>M</original>
    <variation>I</variation>
    <location>
        <position position="388"/>
    </location>
</feature>
<feature type="mutagenesis site" description="Strongly reduced ATPase activity." evidence="3">
    <original>E</original>
    <variation>A</variation>
    <location>
        <position position="391"/>
    </location>
</feature>
<organism>
    <name type="scientific">Myxococcus xanthus (strain DK1622)</name>
    <dbReference type="NCBI Taxonomy" id="246197"/>
    <lineage>
        <taxon>Bacteria</taxon>
        <taxon>Pseudomonadati</taxon>
        <taxon>Myxococcota</taxon>
        <taxon>Myxococcia</taxon>
        <taxon>Myxococcales</taxon>
        <taxon>Cystobacterineae</taxon>
        <taxon>Myxococcaceae</taxon>
        <taxon>Myxococcus</taxon>
    </lineage>
</organism>
<reference key="1">
    <citation type="journal article" date="2006" name="Proc. Natl. Acad. Sci. U.S.A.">
        <title>Evolution of sensory complexity recorded in a myxobacterial genome.</title>
        <authorList>
            <person name="Goldman B.S."/>
            <person name="Nierman W.C."/>
            <person name="Kaiser D."/>
            <person name="Slater S.C."/>
            <person name="Durkin A.S."/>
            <person name="Eisen J.A."/>
            <person name="Ronning C.M."/>
            <person name="Barbazuk W.B."/>
            <person name="Blanchard M."/>
            <person name="Field C."/>
            <person name="Halling C."/>
            <person name="Hinkle G."/>
            <person name="Iartchuk O."/>
            <person name="Kim H.S."/>
            <person name="Mackenzie C."/>
            <person name="Madupu R."/>
            <person name="Miller N."/>
            <person name="Shvartsbeyn A."/>
            <person name="Sullivan S.A."/>
            <person name="Vaudin M."/>
            <person name="Wiegand R."/>
            <person name="Kaplan H.B."/>
        </authorList>
    </citation>
    <scope>NUCLEOTIDE SEQUENCE [LARGE SCALE GENOMIC DNA]</scope>
    <source>
        <strain>DK1622</strain>
    </source>
</reference>
<reference key="2">
    <citation type="journal article" date="2008" name="J. Bacteriol.">
        <title>PilB and PilT are ATPases acting antagonistically in type IV pilus function in Myxococcus xanthus.</title>
        <authorList>
            <person name="Jakovljevic V."/>
            <person name="Leonardy S."/>
            <person name="Hoppert M."/>
            <person name="Soegaard-Andersen L."/>
        </authorList>
    </citation>
    <scope>FUNCTION</scope>
    <scope>DISRUPTION PHENOTYPE</scope>
    <scope>SUBCELLULAR LOCATION</scope>
    <scope>MUTAGENESIS OF LYS-327 AND GLU-391</scope>
</reference>
<reference key="3">
    <citation type="journal article" date="2016" name="J. Biol. Chem.">
        <title>The Type IV Pilus assembly ATPase PilB of Myxococcus xanthus interacts with the inner membrane platform protein PilC and the nucleotide-binding protein PilM.</title>
        <authorList>
            <person name="Bischof L.F."/>
            <person name="Friedrich C."/>
            <person name="Harms A."/>
            <person name="Soegaard-Andersen L."/>
            <person name="van der Does C."/>
        </authorList>
    </citation>
    <scope>FUNCTION</scope>
    <scope>INTERACTION WITH PILC AND PILM</scope>
</reference>
<reference key="4">
    <citation type="journal article" date="2017" name="Sci. Rep.">
        <title>The type IV pilus assembly ATPase PilB functions as a signaling protein to regulate exopolysaccharide production in Myxococcus xanthus.</title>
        <authorList>
            <person name="Black W.P."/>
            <person name="Wang L."/>
            <person name="Jing X."/>
            <person name="Saldana R.C."/>
            <person name="Li F."/>
            <person name="Scharf B.E."/>
            <person name="Schubot F.D."/>
            <person name="Yang Z."/>
        </authorList>
    </citation>
    <scope>FUNCTION</scope>
    <scope>MUTAGENESIS OF MET-388</scope>
    <scope>DISRUPTION PHENOTYPE</scope>
</reference>
<reference evidence="7" key="5">
    <citation type="journal article" date="2016" name="Science">
        <title>Architecture of the type IVa pilus machine.</title>
        <authorList>
            <person name="Chang Y.W."/>
            <person name="Rettberg L.A."/>
            <person name="Treuner-Lange A."/>
            <person name="Iwasa J."/>
            <person name="Sogaard-Andersen L."/>
            <person name="Jensen G.J."/>
        </authorList>
    </citation>
    <scope>STRUCTURE BY NMR</scope>
    <scope>FUNCTION</scope>
    <scope>DISRUPTION PHENOTYPE</scope>
    <scope>SUBUNIT</scope>
</reference>
<comment type="function">
    <text evidence="3 5 6">ATPase component of the type IV pilus (T4P) that plays a role in surface and host cell adhesion, colonization, biofilm maturation, virulence, and twitching, a form of surface-associated motility facilitated by cycles of extension, adhesion, and retraction of T4P fibers. Acts as a molecular motor to provide the energy that is required for biogenesis of the pilus and the extrusion of substrates generated in the cytoplasm (PubMed:26965631, PubMed:28779124). PilB ATPase activity is also essential for T4P extension while antagonist PilT ATPase activity is required for T4P retraction (PubMed:18223089). In addition, functions as a regulator of exopolysaccharide (EPS) downstream of the T4P filament and upstream of the Dif signaling (PubMed:28779124).</text>
</comment>
<comment type="subunit">
    <text evidence="2 4">Homohexamer (By similarity). Interacts with PilC (PubMed:26851283). Interacts with PilM (PubMed:26851283).</text>
</comment>
<comment type="subcellular location">
    <subcellularLocation>
        <location evidence="3">Cytoplasm</location>
    </subcellularLocation>
    <text evidence="1">Displays polar localization.</text>
</comment>
<comment type="domain">
    <text evidence="1">The ATP-binding site is essential for assembly of pili.</text>
</comment>
<comment type="disruption phenotype">
    <text evidence="3 5 6">Deletion mutants show complete loss of T4P-dependent motility since they did not assemble T4P (PubMed:18223089, PubMed:28779124). PilB and PilT double mutant also lack T4P-dependent motility (PubMed:26965631).</text>
</comment>
<comment type="similarity">
    <text>Belongs to the GSP E family.</text>
</comment>
<evidence type="ECO:0000250" key="1">
    <source>
        <dbReference type="UniProtKB" id="P22608"/>
    </source>
</evidence>
<evidence type="ECO:0000250" key="2">
    <source>
        <dbReference type="UniProtKB" id="Q5SLC9"/>
    </source>
</evidence>
<evidence type="ECO:0000269" key="3">
    <source>
    </source>
</evidence>
<evidence type="ECO:0000269" key="4">
    <source>
    </source>
</evidence>
<evidence type="ECO:0000269" key="5">
    <source>
    </source>
</evidence>
<evidence type="ECO:0000269" key="6">
    <source>
    </source>
</evidence>
<evidence type="ECO:0007744" key="7">
    <source>
        <dbReference type="PDB" id="3JC8"/>
    </source>
</evidence>
<name>PILB_MYXXD</name>
<protein>
    <recommendedName>
        <fullName>Type IV pilus assembly ATPase PilB</fullName>
    </recommendedName>
</protein>
<gene>
    <name type="primary">pilB</name>
    <name type="ordered locus">MXAN_5788</name>
</gene>